<accession>Q16656</accession>
<accession>A8K4C6</accession>
<accession>B4DDV6</accession>
<accession>Q15305</accession>
<accession>Q96AN2</accession>
<protein>
    <recommendedName>
        <fullName>Nuclear respiratory factor 1</fullName>
        <shortName>NRF-1</shortName>
    </recommendedName>
    <alternativeName>
        <fullName>Alpha palindromic-binding protein</fullName>
        <shortName>Alpha-pal</shortName>
    </alternativeName>
</protein>
<keyword id="KW-0002">3D-structure</keyword>
<keyword id="KW-0010">Activator</keyword>
<keyword id="KW-0025">Alternative splicing</keyword>
<keyword id="KW-0903">Direct protein sequencing</keyword>
<keyword id="KW-0238">DNA-binding</keyword>
<keyword id="KW-1017">Isopeptide bond</keyword>
<keyword id="KW-0539">Nucleus</keyword>
<keyword id="KW-0597">Phosphoprotein</keyword>
<keyword id="KW-1267">Proteomics identification</keyword>
<keyword id="KW-1185">Reference proteome</keyword>
<keyword id="KW-0804">Transcription</keyword>
<keyword id="KW-0805">Transcription regulation</keyword>
<keyword id="KW-0832">Ubl conjugation</keyword>
<feature type="chain" id="PRO_0000100208" description="Nuclear respiratory factor 1">
    <location>
        <begin position="1"/>
        <end position="503"/>
    </location>
</feature>
<feature type="DNA-binding region">
    <location>
        <begin position="109"/>
        <end position="305"/>
    </location>
</feature>
<feature type="region of interest" description="Dimerization">
    <location>
        <begin position="1"/>
        <end position="78"/>
    </location>
</feature>
<feature type="region of interest" description="Disordered" evidence="1">
    <location>
        <begin position="36"/>
        <end position="57"/>
    </location>
</feature>
<feature type="region of interest" description="Required for transcriptional activation">
    <location>
        <begin position="301"/>
        <end position="476"/>
    </location>
</feature>
<feature type="short sequence motif" description="Nuclear localization signal">
    <location>
        <begin position="88"/>
        <end position="116"/>
    </location>
</feature>
<feature type="modified residue" description="Phosphoserine; by CK2" evidence="4">
    <location>
        <position position="39"/>
    </location>
</feature>
<feature type="modified residue" description="Phosphoserine; by CK2" evidence="4">
    <location>
        <position position="44"/>
    </location>
</feature>
<feature type="modified residue" description="Phosphoserine; by CK2" evidence="4">
    <location>
        <position position="46"/>
    </location>
</feature>
<feature type="modified residue" description="Phosphoserine; by CK2" evidence="4">
    <location>
        <position position="47"/>
    </location>
</feature>
<feature type="modified residue" description="Phosphoserine; by CK2" evidence="4">
    <location>
        <position position="52"/>
    </location>
</feature>
<feature type="cross-link" description="Glycyl lysine isopeptide (Lys-Gly) (interchain with G-Cter in SUMO2)" evidence="9">
    <location>
        <position position="139"/>
    </location>
</feature>
<feature type="splice variant" id="VSP_054330" description="In isoform 3." evidence="5">
    <location>
        <begin position="1"/>
        <end position="161"/>
    </location>
</feature>
<feature type="splice variant" id="VSP_003598" description="In isoform Short." evidence="8">
    <location>
        <begin position="256"/>
        <end position="321"/>
    </location>
</feature>
<feature type="splice variant" id="VSP_054331" description="In isoform 4." evidence="6 7">
    <original>N</original>
    <variation>NGLFMADRAGRKWILTDKAT</variation>
    <location>
        <position position="449"/>
    </location>
</feature>
<feature type="sequence conflict" description="In Ref. 3; AAA79013." evidence="8" ref="3">
    <original>V</original>
    <variation>VV</variation>
    <location>
        <position position="322"/>
    </location>
</feature>
<feature type="sequence conflict" description="In Ref. 5; BAG56867." evidence="8" ref="5">
    <original>T</original>
    <variation>A</variation>
    <location>
        <position position="403"/>
    </location>
</feature>
<feature type="strand" evidence="11">
    <location>
        <begin position="63"/>
        <end position="65"/>
    </location>
</feature>
<feature type="helix" evidence="11">
    <location>
        <begin position="66"/>
        <end position="72"/>
    </location>
</feature>
<feature type="helix" evidence="11">
    <location>
        <begin position="76"/>
        <end position="90"/>
    </location>
</feature>
<feature type="helix" evidence="11">
    <location>
        <begin position="101"/>
        <end position="126"/>
    </location>
</feature>
<feature type="strand" evidence="11">
    <location>
        <begin position="129"/>
        <end position="136"/>
    </location>
</feature>
<feature type="strand" evidence="11">
    <location>
        <begin position="139"/>
        <end position="141"/>
    </location>
</feature>
<feature type="strand" evidence="11">
    <location>
        <begin position="143"/>
        <end position="149"/>
    </location>
</feature>
<feature type="helix" evidence="11">
    <location>
        <begin position="152"/>
        <end position="157"/>
    </location>
</feature>
<feature type="helix" evidence="11">
    <location>
        <begin position="160"/>
        <end position="171"/>
    </location>
</feature>
<feature type="strand" evidence="10">
    <location>
        <begin position="188"/>
        <end position="190"/>
    </location>
</feature>
<feature type="helix" evidence="11">
    <location>
        <begin position="197"/>
        <end position="199"/>
    </location>
</feature>
<feature type="helix" evidence="11">
    <location>
        <begin position="202"/>
        <end position="217"/>
    </location>
</feature>
<feature type="helix" evidence="11">
    <location>
        <begin position="227"/>
        <end position="229"/>
    </location>
</feature>
<feature type="helix" evidence="11">
    <location>
        <begin position="250"/>
        <end position="255"/>
    </location>
</feature>
<feature type="helix" evidence="11">
    <location>
        <begin position="258"/>
        <end position="272"/>
    </location>
</feature>
<feature type="helix" evidence="11">
    <location>
        <begin position="276"/>
        <end position="279"/>
    </location>
</feature>
<feature type="turn" evidence="10">
    <location>
        <begin position="280"/>
        <end position="282"/>
    </location>
</feature>
<sequence length="503" mass="53541">MEEHGVTQTEHMATIEAHAVAQQVQQVHVATYTEHSMLSADEDSPSSPEDTSYDDSDILNSTAADEVTAHLAAAGPVGMAAAAAVATGKKRKRPHVFESNPSIRKRQQTRLLRKLRATLDEYTTRVGQQAIVLCISPSKPNPVFKVFGAAPLENVVRKYKSMILEDLESALAEHAPAPQEVNSELPPLTIDGIPVSVDKMTQAQLRAFIPEMLKYSTGRGKPGWGKESCKPIWWPEDIPWANVRSDVRTEEQKQRVSWTQALRTIVKNCYKQHGREDLLYAFEDQQTQTQATATHSIAHLVPSQTVVQTFSNPDGTVSLIQVGTGATVATLADASELPTTVTVAQVNYSAVADGEVEQNWATLQGGEMTIQTTQASEATQAVASLAEAAVAASQEMQQGATVTMALNSEAAAHAVATLAEATLQGGGQIVLSGETAAAVGALTGVQDANGLVQIPVSMYQTVVTSLAQGNGPVQVAMAPVTTRISDSAVTMDGQAVEVVTLEQ</sequence>
<gene>
    <name type="primary">NRF1</name>
</gene>
<comment type="function">
    <text>Transcription factor that activates the expression of the EIF2S1 (EIF2-alpha) gene. Links the transcriptional modulation of key metabolic genes to cellular growth and development. Implicated in the control of nuclear genes required for respiration, heme biosynthesis, and mitochondrial DNA transcription and replication.</text>
</comment>
<comment type="subunit">
    <text evidence="2 3">Homodimer. Binds DNA as a dimer. Interacts with PPRC1.</text>
</comment>
<comment type="interaction">
    <interactant intactId="EBI-2547810">
        <id>Q16656</id>
    </interactant>
    <interactant intactId="EBI-375001">
        <id>P24385</id>
        <label>CCND1</label>
    </interactant>
    <organismsDiffer>false</organismsDiffer>
    <experiments>2</experiments>
</comment>
<comment type="interaction">
    <interactant intactId="EBI-2547810">
        <id>Q16656</id>
    </interactant>
    <interactant intactId="EBI-701903">
        <id>Q14192</id>
        <label>FHL2</label>
    </interactant>
    <organismsDiffer>false</organismsDiffer>
    <experiments>5</experiments>
</comment>
<comment type="interaction">
    <interactant intactId="EBI-2547810">
        <id>Q16656</id>
    </interactant>
    <interactant intactId="EBI-1389308">
        <id>Q7Z3K3</id>
        <label>POGZ</label>
    </interactant>
    <organismsDiffer>false</organismsDiffer>
    <experiments>3</experiments>
</comment>
<comment type="interaction">
    <interactant intactId="EBI-2547810">
        <id>Q16656</id>
    </interactant>
    <interactant intactId="EBI-716046">
        <id>Q9NRC8</id>
        <label>SIRT7</label>
    </interactant>
    <organismsDiffer>false</organismsDiffer>
    <experiments>2</experiments>
</comment>
<comment type="interaction">
    <interactant intactId="EBI-2547810">
        <id>Q16656</id>
    </interactant>
    <interactant intactId="EBI-10198587">
        <id>Q02446</id>
        <label>SP4</label>
    </interactant>
    <organismsDiffer>false</organismsDiffer>
    <experiments>3</experiments>
</comment>
<comment type="interaction">
    <interactant intactId="EBI-2547810">
        <id>Q16656</id>
    </interactant>
    <interactant intactId="EBI-355744">
        <id>Q12933</id>
        <label>TRAF2</label>
    </interactant>
    <organismsDiffer>false</organismsDiffer>
    <experiments>3</experiments>
</comment>
<comment type="interaction">
    <interactant intactId="EBI-11742836">
        <id>Q16656-4</id>
    </interactant>
    <interactant intactId="EBI-712648">
        <id>O95994</id>
        <label>AGR2</label>
    </interactant>
    <organismsDiffer>false</organismsDiffer>
    <experiments>5</experiments>
</comment>
<comment type="interaction">
    <interactant intactId="EBI-11742836">
        <id>Q16656-4</id>
    </interactant>
    <interactant intactId="EBI-21535880">
        <id>Q92870-2</id>
        <label>APBB2</label>
    </interactant>
    <organismsDiffer>false</organismsDiffer>
    <experiments>3</experiments>
</comment>
<comment type="interaction">
    <interactant intactId="EBI-11742836">
        <id>Q16656-4</id>
    </interactant>
    <interactant intactId="EBI-748297">
        <id>Q9BXC9</id>
        <label>BBS2</label>
    </interactant>
    <organismsDiffer>false</organismsDiffer>
    <experiments>3</experiments>
</comment>
<comment type="interaction">
    <interactant intactId="EBI-11742836">
        <id>Q16656-4</id>
    </interactant>
    <interactant intactId="EBI-1012434">
        <id>Q6AI39</id>
        <label>BICRAL</label>
    </interactant>
    <organismsDiffer>false</organismsDiffer>
    <experiments>3</experiments>
</comment>
<comment type="interaction">
    <interactant intactId="EBI-11742836">
        <id>Q16656-4</id>
    </interactant>
    <interactant intactId="EBI-10693038">
        <id>Q9NSI6-4</id>
        <label>BRWD1</label>
    </interactant>
    <organismsDiffer>false</organismsDiffer>
    <experiments>3</experiments>
</comment>
<comment type="interaction">
    <interactant intactId="EBI-11742836">
        <id>Q16656-4</id>
    </interactant>
    <interactant intactId="EBI-12809220">
        <id>Q5SWW7</id>
        <label>C10orf55</label>
    </interactant>
    <organismsDiffer>false</organismsDiffer>
    <experiments>3</experiments>
</comment>
<comment type="interaction">
    <interactant intactId="EBI-11742836">
        <id>Q16656-4</id>
    </interactant>
    <interactant intactId="EBI-18036948">
        <id>Q3SXR2</id>
        <label>C3orf36</label>
    </interactant>
    <organismsDiffer>false</organismsDiffer>
    <experiments>3</experiments>
</comment>
<comment type="interaction">
    <interactant intactId="EBI-11742836">
        <id>Q16656-4</id>
    </interactant>
    <interactant intactId="EBI-712973">
        <id>P17540</id>
        <label>CKMT2</label>
    </interactant>
    <organismsDiffer>false</organismsDiffer>
    <experiments>3</experiments>
</comment>
<comment type="interaction">
    <interactant intactId="EBI-11742836">
        <id>Q16656-4</id>
    </interactant>
    <interactant intactId="EBI-2528309">
        <id>Q03692</id>
        <label>COL10A1</label>
    </interactant>
    <organismsDiffer>false</organismsDiffer>
    <experiments>3</experiments>
</comment>
<comment type="interaction">
    <interactant intactId="EBI-11742836">
        <id>Q16656-4</id>
    </interactant>
    <interactant intactId="EBI-348169">
        <id>P67870</id>
        <label>CSNK2B</label>
    </interactant>
    <organismsDiffer>false</organismsDiffer>
    <experiments>3</experiments>
</comment>
<comment type="interaction">
    <interactant intactId="EBI-11742836">
        <id>Q16656-4</id>
    </interactant>
    <interactant intactId="EBI-12260294">
        <id>Q9NQ30</id>
        <label>ESM1</label>
    </interactant>
    <organismsDiffer>false</organismsDiffer>
    <experiments>3</experiments>
</comment>
<comment type="interaction">
    <interactant intactId="EBI-11742836">
        <id>Q16656-4</id>
    </interactant>
    <interactant intactId="EBI-701903">
        <id>Q14192</id>
        <label>FHL2</label>
    </interactant>
    <organismsDiffer>false</organismsDiffer>
    <experiments>3</experiments>
</comment>
<comment type="interaction">
    <interactant intactId="EBI-11742836">
        <id>Q16656-4</id>
    </interactant>
    <interactant intactId="EBI-12083878">
        <id>Q96JK4-2</id>
        <label>HHIPL1</label>
    </interactant>
    <organismsDiffer>false</organismsDiffer>
    <experiments>3</experiments>
</comment>
<comment type="interaction">
    <interactant intactId="EBI-11742836">
        <id>Q16656-4</id>
    </interactant>
    <interactant intactId="EBI-9089060">
        <id>Q7Z7F0-4</id>
        <label>KHDC4</label>
    </interactant>
    <organismsDiffer>false</organismsDiffer>
    <experiments>3</experiments>
</comment>
<comment type="interaction">
    <interactant intactId="EBI-11742836">
        <id>Q16656-4</id>
    </interactant>
    <interactant intactId="EBI-2796400">
        <id>Q9UIH9</id>
        <label>KLF15</label>
    </interactant>
    <organismsDiffer>false</organismsDiffer>
    <experiments>3</experiments>
</comment>
<comment type="interaction">
    <interactant intactId="EBI-11742836">
        <id>Q16656-4</id>
    </interactant>
    <interactant intactId="EBI-540602">
        <id>O15131</id>
        <label>KPNA5</label>
    </interactant>
    <organismsDiffer>false</organismsDiffer>
    <experiments>3</experiments>
</comment>
<comment type="interaction">
    <interactant intactId="EBI-11742836">
        <id>Q16656-4</id>
    </interactant>
    <interactant intactId="EBI-10221390">
        <id>P78385</id>
        <label>KRT83</label>
    </interactant>
    <organismsDiffer>false</organismsDiffer>
    <experiments>3</experiments>
</comment>
<comment type="interaction">
    <interactant intactId="EBI-11742836">
        <id>Q16656-4</id>
    </interactant>
    <interactant intactId="EBI-739909">
        <id>Q969R5</id>
        <label>L3MBTL2</label>
    </interactant>
    <organismsDiffer>false</organismsDiffer>
    <experiments>3</experiments>
</comment>
<comment type="interaction">
    <interactant intactId="EBI-11742836">
        <id>Q16656-4</id>
    </interactant>
    <interactant intactId="EBI-11985629">
        <id>Q96JM7-2</id>
        <label>L3MBTL3</label>
    </interactant>
    <organismsDiffer>false</organismsDiffer>
    <experiments>3</experiments>
</comment>
<comment type="interaction">
    <interactant intactId="EBI-11742836">
        <id>Q16656-4</id>
    </interactant>
    <interactant intactId="EBI-12039345">
        <id>Q9UBR4-2</id>
        <label>LHX3</label>
    </interactant>
    <organismsDiffer>false</organismsDiffer>
    <experiments>3</experiments>
</comment>
<comment type="interaction">
    <interactant intactId="EBI-11742836">
        <id>Q16656-4</id>
    </interactant>
    <interactant intactId="EBI-16429099">
        <id>A0A0S2Z5S9</id>
        <label>LHX4</label>
    </interactant>
    <organismsDiffer>false</organismsDiffer>
    <experiments>3</experiments>
</comment>
<comment type="interaction">
    <interactant intactId="EBI-11742836">
        <id>Q16656-4</id>
    </interactant>
    <interactant intactId="EBI-10258746">
        <id>Q9UPM6</id>
        <label>LHX6</label>
    </interactant>
    <organismsDiffer>false</organismsDiffer>
    <experiments>3</experiments>
</comment>
<comment type="interaction">
    <interactant intactId="EBI-11742836">
        <id>Q16656-4</id>
    </interactant>
    <interactant intactId="EBI-2798728">
        <id>P61968</id>
        <label>LMO4</label>
    </interactant>
    <organismsDiffer>false</organismsDiffer>
    <experiments>3</experiments>
</comment>
<comment type="interaction">
    <interactant intactId="EBI-11742836">
        <id>Q16656-4</id>
    </interactant>
    <interactant intactId="EBI-2816254">
        <id>Q14764</id>
        <label>MVP</label>
    </interactant>
    <organismsDiffer>false</organismsDiffer>
    <experiments>3</experiments>
</comment>
<comment type="interaction">
    <interactant intactId="EBI-11742836">
        <id>Q16656-4</id>
    </interactant>
    <interactant intactId="EBI-1246261">
        <id>O14561</id>
        <label>NDUFAB1</label>
    </interactant>
    <organismsDiffer>false</organismsDiffer>
    <experiments>3</experiments>
</comment>
<comment type="interaction">
    <interactant intactId="EBI-11742836">
        <id>Q16656-4</id>
    </interactant>
    <interactant intactId="EBI-17242559">
        <id>Q495U3</id>
        <label>PANX2</label>
    </interactant>
    <organismsDiffer>false</organismsDiffer>
    <experiments>3</experiments>
</comment>
<comment type="interaction">
    <interactant intactId="EBI-11742836">
        <id>Q16656-4</id>
    </interactant>
    <interactant intactId="EBI-1389308">
        <id>Q7Z3K3</id>
        <label>POGZ</label>
    </interactant>
    <organismsDiffer>false</organismsDiffer>
    <experiments>7</experiments>
</comment>
<comment type="interaction">
    <interactant intactId="EBI-11742836">
        <id>Q16656-4</id>
    </interactant>
    <interactant intactId="EBI-12829638">
        <id>Q8N1D0-2</id>
        <label>SLC22A18AS</label>
    </interactant>
    <organismsDiffer>false</organismsDiffer>
    <experiments>3</experiments>
</comment>
<comment type="interaction">
    <interactant intactId="EBI-11742836">
        <id>Q16656-4</id>
    </interactant>
    <interactant intactId="EBI-9088579">
        <id>Q02086-2</id>
        <label>SP2</label>
    </interactant>
    <organismsDiffer>false</organismsDiffer>
    <experiments>3</experiments>
</comment>
<comment type="interaction">
    <interactant intactId="EBI-11742836">
        <id>Q16656-4</id>
    </interactant>
    <interactant intactId="EBI-10198587">
        <id>Q02446</id>
        <label>SP4</label>
    </interactant>
    <organismsDiffer>false</organismsDiffer>
    <experiments>3</experiments>
</comment>
<comment type="interaction">
    <interactant intactId="EBI-11742836">
        <id>Q16656-4</id>
    </interactant>
    <interactant intactId="EBI-18115728">
        <id>Q6ZNM6</id>
        <label>SPMIP10</label>
    </interactant>
    <organismsDiffer>false</organismsDiffer>
    <experiments>3</experiments>
</comment>
<comment type="interaction">
    <interactant intactId="EBI-11742836">
        <id>Q16656-4</id>
    </interactant>
    <interactant intactId="EBI-2323209">
        <id>Q99619</id>
        <label>SPSB2</label>
    </interactant>
    <organismsDiffer>false</organismsDiffer>
    <experiments>3</experiments>
</comment>
<comment type="interaction">
    <interactant intactId="EBI-11742836">
        <id>Q16656-4</id>
    </interactant>
    <interactant intactId="EBI-17858294">
        <id>Q8NEQ6</id>
        <label>SRARP</label>
    </interactant>
    <organismsDiffer>false</organismsDiffer>
    <experiments>3</experiments>
</comment>
<comment type="interaction">
    <interactant intactId="EBI-11742836">
        <id>Q16656-4</id>
    </interactant>
    <interactant intactId="EBI-12840664">
        <id>Q9Y4I5-2</id>
        <label>TESMIN</label>
    </interactant>
    <organismsDiffer>false</organismsDiffer>
    <experiments>3</experiments>
</comment>
<comment type="interaction">
    <interactant intactId="EBI-11742836">
        <id>Q16656-4</id>
    </interactant>
    <interactant intactId="EBI-74615">
        <id>Q9H0E2</id>
        <label>TOLLIP</label>
    </interactant>
    <organismsDiffer>false</organismsDiffer>
    <experiments>3</experiments>
</comment>
<comment type="interaction">
    <interactant intactId="EBI-11742836">
        <id>Q16656-4</id>
    </interactant>
    <interactant intactId="EBI-355744">
        <id>Q12933</id>
        <label>TRAF2</label>
    </interactant>
    <organismsDiffer>false</organismsDiffer>
    <experiments>3</experiments>
</comment>
<comment type="interaction">
    <interactant intactId="EBI-11742836">
        <id>Q16656-4</id>
    </interactant>
    <interactant intactId="EBI-17716262">
        <id>Q9UPQ4-2</id>
        <label>TRIM35</label>
    </interactant>
    <organismsDiffer>false</organismsDiffer>
    <experiments>3</experiments>
</comment>
<comment type="interaction">
    <interactant intactId="EBI-11742836">
        <id>Q16656-4</id>
    </interactant>
    <interactant intactId="EBI-11980193">
        <id>Q14119</id>
        <label>VEZF1</label>
    </interactant>
    <organismsDiffer>false</organismsDiffer>
    <experiments>3</experiments>
</comment>
<comment type="interaction">
    <interactant intactId="EBI-11742836">
        <id>Q16656-4</id>
    </interactant>
    <interactant intactId="EBI-12949277">
        <id>O95789-4</id>
        <label>ZMYM6</label>
    </interactant>
    <organismsDiffer>false</organismsDiffer>
    <experiments>3</experiments>
</comment>
<comment type="subcellular location">
    <subcellularLocation>
        <location>Nucleus</location>
    </subcellularLocation>
</comment>
<comment type="alternative products">
    <event type="alternative splicing"/>
    <isoform>
        <id>Q16656-1</id>
        <name>Long</name>
        <sequence type="displayed"/>
    </isoform>
    <isoform>
        <id>Q16656-2</id>
        <name>Short</name>
        <sequence type="described" ref="VSP_003598"/>
    </isoform>
    <isoform>
        <id>Q16656-3</id>
        <name>3</name>
        <sequence type="described" ref="VSP_054330"/>
    </isoform>
    <isoform>
        <id>Q16656-4</id>
        <name>4</name>
        <sequence type="described" ref="VSP_054331"/>
    </isoform>
</comment>
<comment type="tissue specificity">
    <text>Ubiquitously expressed with strongest expression in skeletal muscle.</text>
</comment>
<comment type="PTM">
    <text evidence="4">Phosphorylation enhances DNA binding.</text>
</comment>
<comment type="similarity">
    <text evidence="8">Belongs to the NRF1/Ewg family.</text>
</comment>
<comment type="online information" name="Atlas of Genetics and Cytogenetics in Oncology and Haematology">
    <link uri="https://atlasgeneticsoncology.org/gene/44233/NRF1"/>
</comment>
<proteinExistence type="evidence at protein level"/>
<name>NRF1_HUMAN</name>
<evidence type="ECO:0000256" key="1">
    <source>
        <dbReference type="SAM" id="MobiDB-lite"/>
    </source>
</evidence>
<evidence type="ECO:0000269" key="2">
    <source>
    </source>
</evidence>
<evidence type="ECO:0000269" key="3">
    <source>
    </source>
</evidence>
<evidence type="ECO:0000269" key="4">
    <source>
    </source>
</evidence>
<evidence type="ECO:0000303" key="5">
    <source>
    </source>
</evidence>
<evidence type="ECO:0000303" key="6">
    <source>
    </source>
</evidence>
<evidence type="ECO:0000303" key="7">
    <source ref="4"/>
</evidence>
<evidence type="ECO:0000305" key="8"/>
<evidence type="ECO:0007744" key="9">
    <source>
    </source>
</evidence>
<evidence type="ECO:0007829" key="10">
    <source>
        <dbReference type="PDB" id="8K3D"/>
    </source>
</evidence>
<evidence type="ECO:0007829" key="11">
    <source>
        <dbReference type="PDB" id="8K4L"/>
    </source>
</evidence>
<reference key="1">
    <citation type="journal article" date="1993" name="Genes Dev.">
        <title>NRF-1, an activator involved in nuclear-mitochondrial interactions, utilizes a new DNA-binding domain conserved in a family of developmental regulators.</title>
        <authorList>
            <person name="Virbasius C.A."/>
            <person name="Virbasius J.V."/>
            <person name="Scarpulla R.C."/>
        </authorList>
    </citation>
    <scope>NUCLEOTIDE SEQUENCE [MRNA] (ISOFORM LONG)</scope>
    <scope>PROTEIN SEQUENCE OF 161-186 AND 256-263</scope>
</reference>
<reference key="2">
    <citation type="journal article" date="1994" name="J. Biol. Chem.">
        <title>A key transcription factor for eukaryotic initiation factor-2 alpha is strongly homologous to developmental transcription factors and may link metabolic genes to cellular growth and development.</title>
        <authorList>
            <person name="Efiok B.J.S."/>
            <person name="Chiorini J.A."/>
            <person name="Safer B."/>
        </authorList>
    </citation>
    <scope>NUCLEOTIDE SEQUENCE [MRNA] (ISOFORM LONG)</scope>
    <scope>PROTEIN SEQUENCE OF 161-183 AND 231-253</scope>
</reference>
<reference key="3">
    <citation type="journal article" date="1995" name="J. Biol. Chem.">
        <title>Structure, expression, and chromosomal assignment of the human gene encoding nuclear respiratory factor 1.</title>
        <authorList>
            <person name="Gopalakrishnan L."/>
            <person name="Scarpulla R.C."/>
        </authorList>
    </citation>
    <scope>NUCLEOTIDE SEQUENCE [GENOMIC DNA]</scope>
    <source>
        <tissue>Placenta</tissue>
    </source>
</reference>
<reference key="4">
    <citation type="submission" date="2007-09" db="EMBL/GenBank/DDBJ databases">
        <authorList>
            <person name="Yang S.J."/>
            <person name="Li K.N."/>
            <person name="Zhang Y.Q."/>
        </authorList>
    </citation>
    <scope>NUCLEOTIDE SEQUENCE [MRNA] (ISOFORM 4)</scope>
    <source>
        <tissue>Hepatoma</tissue>
    </source>
</reference>
<reference key="5">
    <citation type="journal article" date="2004" name="Nat. Genet.">
        <title>Complete sequencing and characterization of 21,243 full-length human cDNAs.</title>
        <authorList>
            <person name="Ota T."/>
            <person name="Suzuki Y."/>
            <person name="Nishikawa T."/>
            <person name="Otsuki T."/>
            <person name="Sugiyama T."/>
            <person name="Irie R."/>
            <person name="Wakamatsu A."/>
            <person name="Hayashi K."/>
            <person name="Sato H."/>
            <person name="Nagai K."/>
            <person name="Kimura K."/>
            <person name="Makita H."/>
            <person name="Sekine M."/>
            <person name="Obayashi M."/>
            <person name="Nishi T."/>
            <person name="Shibahara T."/>
            <person name="Tanaka T."/>
            <person name="Ishii S."/>
            <person name="Yamamoto J."/>
            <person name="Saito K."/>
            <person name="Kawai Y."/>
            <person name="Isono Y."/>
            <person name="Nakamura Y."/>
            <person name="Nagahari K."/>
            <person name="Murakami K."/>
            <person name="Yasuda T."/>
            <person name="Iwayanagi T."/>
            <person name="Wagatsuma M."/>
            <person name="Shiratori A."/>
            <person name="Sudo H."/>
            <person name="Hosoiri T."/>
            <person name="Kaku Y."/>
            <person name="Kodaira H."/>
            <person name="Kondo H."/>
            <person name="Sugawara M."/>
            <person name="Takahashi M."/>
            <person name="Kanda K."/>
            <person name="Yokoi T."/>
            <person name="Furuya T."/>
            <person name="Kikkawa E."/>
            <person name="Omura Y."/>
            <person name="Abe K."/>
            <person name="Kamihara K."/>
            <person name="Katsuta N."/>
            <person name="Sato K."/>
            <person name="Tanikawa M."/>
            <person name="Yamazaki M."/>
            <person name="Ninomiya K."/>
            <person name="Ishibashi T."/>
            <person name="Yamashita H."/>
            <person name="Murakawa K."/>
            <person name="Fujimori K."/>
            <person name="Tanai H."/>
            <person name="Kimata M."/>
            <person name="Watanabe M."/>
            <person name="Hiraoka S."/>
            <person name="Chiba Y."/>
            <person name="Ishida S."/>
            <person name="Ono Y."/>
            <person name="Takiguchi S."/>
            <person name="Watanabe S."/>
            <person name="Yosida M."/>
            <person name="Hotuta T."/>
            <person name="Kusano J."/>
            <person name="Kanehori K."/>
            <person name="Takahashi-Fujii A."/>
            <person name="Hara H."/>
            <person name="Tanase T.-O."/>
            <person name="Nomura Y."/>
            <person name="Togiya S."/>
            <person name="Komai F."/>
            <person name="Hara R."/>
            <person name="Takeuchi K."/>
            <person name="Arita M."/>
            <person name="Imose N."/>
            <person name="Musashino K."/>
            <person name="Yuuki H."/>
            <person name="Oshima A."/>
            <person name="Sasaki N."/>
            <person name="Aotsuka S."/>
            <person name="Yoshikawa Y."/>
            <person name="Matsunawa H."/>
            <person name="Ichihara T."/>
            <person name="Shiohata N."/>
            <person name="Sano S."/>
            <person name="Moriya S."/>
            <person name="Momiyama H."/>
            <person name="Satoh N."/>
            <person name="Takami S."/>
            <person name="Terashima Y."/>
            <person name="Suzuki O."/>
            <person name="Nakagawa S."/>
            <person name="Senoh A."/>
            <person name="Mizoguchi H."/>
            <person name="Goto Y."/>
            <person name="Shimizu F."/>
            <person name="Wakebe H."/>
            <person name="Hishigaki H."/>
            <person name="Watanabe T."/>
            <person name="Sugiyama A."/>
            <person name="Takemoto M."/>
            <person name="Kawakami B."/>
            <person name="Yamazaki M."/>
            <person name="Watanabe K."/>
            <person name="Kumagai A."/>
            <person name="Itakura S."/>
            <person name="Fukuzumi Y."/>
            <person name="Fujimori Y."/>
            <person name="Komiyama M."/>
            <person name="Tashiro H."/>
            <person name="Tanigami A."/>
            <person name="Fujiwara T."/>
            <person name="Ono T."/>
            <person name="Yamada K."/>
            <person name="Fujii Y."/>
            <person name="Ozaki K."/>
            <person name="Hirao M."/>
            <person name="Ohmori Y."/>
            <person name="Kawabata A."/>
            <person name="Hikiji T."/>
            <person name="Kobatake N."/>
            <person name="Inagaki H."/>
            <person name="Ikema Y."/>
            <person name="Okamoto S."/>
            <person name="Okitani R."/>
            <person name="Kawakami T."/>
            <person name="Noguchi S."/>
            <person name="Itoh T."/>
            <person name="Shigeta K."/>
            <person name="Senba T."/>
            <person name="Matsumura K."/>
            <person name="Nakajima Y."/>
            <person name="Mizuno T."/>
            <person name="Morinaga M."/>
            <person name="Sasaki M."/>
            <person name="Togashi T."/>
            <person name="Oyama M."/>
            <person name="Hata H."/>
            <person name="Watanabe M."/>
            <person name="Komatsu T."/>
            <person name="Mizushima-Sugano J."/>
            <person name="Satoh T."/>
            <person name="Shirai Y."/>
            <person name="Takahashi Y."/>
            <person name="Nakagawa K."/>
            <person name="Okumura K."/>
            <person name="Nagase T."/>
            <person name="Nomura N."/>
            <person name="Kikuchi H."/>
            <person name="Masuho Y."/>
            <person name="Yamashita R."/>
            <person name="Nakai K."/>
            <person name="Yada T."/>
            <person name="Nakamura Y."/>
            <person name="Ohara O."/>
            <person name="Isogai T."/>
            <person name="Sugano S."/>
        </authorList>
    </citation>
    <scope>NUCLEOTIDE SEQUENCE [LARGE SCALE MRNA] (ISOFORMS LONG AND 3)</scope>
    <source>
        <tissue>Urinary bladder</tissue>
    </source>
</reference>
<reference key="6">
    <citation type="journal article" date="2003" name="Nature">
        <title>The DNA sequence of human chromosome 7.</title>
        <authorList>
            <person name="Hillier L.W."/>
            <person name="Fulton R.S."/>
            <person name="Fulton L.A."/>
            <person name="Graves T.A."/>
            <person name="Pepin K.H."/>
            <person name="Wagner-McPherson C."/>
            <person name="Layman D."/>
            <person name="Maas J."/>
            <person name="Jaeger S."/>
            <person name="Walker R."/>
            <person name="Wylie K."/>
            <person name="Sekhon M."/>
            <person name="Becker M.C."/>
            <person name="O'Laughlin M.D."/>
            <person name="Schaller M.E."/>
            <person name="Fewell G.A."/>
            <person name="Delehaunty K.D."/>
            <person name="Miner T.L."/>
            <person name="Nash W.E."/>
            <person name="Cordes M."/>
            <person name="Du H."/>
            <person name="Sun H."/>
            <person name="Edwards J."/>
            <person name="Bradshaw-Cordum H."/>
            <person name="Ali J."/>
            <person name="Andrews S."/>
            <person name="Isak A."/>
            <person name="Vanbrunt A."/>
            <person name="Nguyen C."/>
            <person name="Du F."/>
            <person name="Lamar B."/>
            <person name="Courtney L."/>
            <person name="Kalicki J."/>
            <person name="Ozersky P."/>
            <person name="Bielicki L."/>
            <person name="Scott K."/>
            <person name="Holmes A."/>
            <person name="Harkins R."/>
            <person name="Harris A."/>
            <person name="Strong C.M."/>
            <person name="Hou S."/>
            <person name="Tomlinson C."/>
            <person name="Dauphin-Kohlberg S."/>
            <person name="Kozlowicz-Reilly A."/>
            <person name="Leonard S."/>
            <person name="Rohlfing T."/>
            <person name="Rock S.M."/>
            <person name="Tin-Wollam A.-M."/>
            <person name="Abbott A."/>
            <person name="Minx P."/>
            <person name="Maupin R."/>
            <person name="Strowmatt C."/>
            <person name="Latreille P."/>
            <person name="Miller N."/>
            <person name="Johnson D."/>
            <person name="Murray J."/>
            <person name="Woessner J.P."/>
            <person name="Wendl M.C."/>
            <person name="Yang S.-P."/>
            <person name="Schultz B.R."/>
            <person name="Wallis J.W."/>
            <person name="Spieth J."/>
            <person name="Bieri T.A."/>
            <person name="Nelson J.O."/>
            <person name="Berkowicz N."/>
            <person name="Wohldmann P.E."/>
            <person name="Cook L.L."/>
            <person name="Hickenbotham M.T."/>
            <person name="Eldred J."/>
            <person name="Williams D."/>
            <person name="Bedell J.A."/>
            <person name="Mardis E.R."/>
            <person name="Clifton S.W."/>
            <person name="Chissoe S.L."/>
            <person name="Marra M.A."/>
            <person name="Raymond C."/>
            <person name="Haugen E."/>
            <person name="Gillett W."/>
            <person name="Zhou Y."/>
            <person name="James R."/>
            <person name="Phelps K."/>
            <person name="Iadanoto S."/>
            <person name="Bubb K."/>
            <person name="Simms E."/>
            <person name="Levy R."/>
            <person name="Clendenning J."/>
            <person name="Kaul R."/>
            <person name="Kent W.J."/>
            <person name="Furey T.S."/>
            <person name="Baertsch R.A."/>
            <person name="Brent M.R."/>
            <person name="Keibler E."/>
            <person name="Flicek P."/>
            <person name="Bork P."/>
            <person name="Suyama M."/>
            <person name="Bailey J.A."/>
            <person name="Portnoy M.E."/>
            <person name="Torrents D."/>
            <person name="Chinwalla A.T."/>
            <person name="Gish W.R."/>
            <person name="Eddy S.R."/>
            <person name="McPherson J.D."/>
            <person name="Olson M.V."/>
            <person name="Eichler E.E."/>
            <person name="Green E.D."/>
            <person name="Waterston R.H."/>
            <person name="Wilson R.K."/>
        </authorList>
    </citation>
    <scope>NUCLEOTIDE SEQUENCE [LARGE SCALE GENOMIC DNA]</scope>
</reference>
<reference key="7">
    <citation type="journal article" date="2003" name="Science">
        <title>Human chromosome 7: DNA sequence and biology.</title>
        <authorList>
            <person name="Scherer S.W."/>
            <person name="Cheung J."/>
            <person name="MacDonald J.R."/>
            <person name="Osborne L.R."/>
            <person name="Nakabayashi K."/>
            <person name="Herbrick J.-A."/>
            <person name="Carson A.R."/>
            <person name="Parker-Katiraee L."/>
            <person name="Skaug J."/>
            <person name="Khaja R."/>
            <person name="Zhang J."/>
            <person name="Hudek A.K."/>
            <person name="Li M."/>
            <person name="Haddad M."/>
            <person name="Duggan G.E."/>
            <person name="Fernandez B.A."/>
            <person name="Kanematsu E."/>
            <person name="Gentles S."/>
            <person name="Christopoulos C.C."/>
            <person name="Choufani S."/>
            <person name="Kwasnicka D."/>
            <person name="Zheng X.H."/>
            <person name="Lai Z."/>
            <person name="Nusskern D.R."/>
            <person name="Zhang Q."/>
            <person name="Gu Z."/>
            <person name="Lu F."/>
            <person name="Zeesman S."/>
            <person name="Nowaczyk M.J."/>
            <person name="Teshima I."/>
            <person name="Chitayat D."/>
            <person name="Shuman C."/>
            <person name="Weksberg R."/>
            <person name="Zackai E.H."/>
            <person name="Grebe T.A."/>
            <person name="Cox S.R."/>
            <person name="Kirkpatrick S.J."/>
            <person name="Rahman N."/>
            <person name="Friedman J.M."/>
            <person name="Heng H.H.Q."/>
            <person name="Pelicci P.G."/>
            <person name="Lo-Coco F."/>
            <person name="Belloni E."/>
            <person name="Shaffer L.G."/>
            <person name="Pober B."/>
            <person name="Morton C.C."/>
            <person name="Gusella J.F."/>
            <person name="Bruns G.A.P."/>
            <person name="Korf B.R."/>
            <person name="Quade B.J."/>
            <person name="Ligon A.H."/>
            <person name="Ferguson H."/>
            <person name="Higgins A.W."/>
            <person name="Leach N.T."/>
            <person name="Herrick S.R."/>
            <person name="Lemyre E."/>
            <person name="Farra C.G."/>
            <person name="Kim H.-G."/>
            <person name="Summers A.M."/>
            <person name="Gripp K.W."/>
            <person name="Roberts W."/>
            <person name="Szatmari P."/>
            <person name="Winsor E.J.T."/>
            <person name="Grzeschik K.-H."/>
            <person name="Teebi A."/>
            <person name="Minassian B.A."/>
            <person name="Kere J."/>
            <person name="Armengol L."/>
            <person name="Pujana M.A."/>
            <person name="Estivill X."/>
            <person name="Wilson M.D."/>
            <person name="Koop B.F."/>
            <person name="Tosi S."/>
            <person name="Moore G.E."/>
            <person name="Boright A.P."/>
            <person name="Zlotorynski E."/>
            <person name="Kerem B."/>
            <person name="Kroisel P.M."/>
            <person name="Petek E."/>
            <person name="Oscier D.G."/>
            <person name="Mould S.J."/>
            <person name="Doehner H."/>
            <person name="Doehner K."/>
            <person name="Rommens J.M."/>
            <person name="Vincent J.B."/>
            <person name="Venter J.C."/>
            <person name="Li P.W."/>
            <person name="Mural R.J."/>
            <person name="Adams M.D."/>
            <person name="Tsui L.-C."/>
        </authorList>
    </citation>
    <scope>NUCLEOTIDE SEQUENCE [LARGE SCALE GENOMIC DNA]</scope>
</reference>
<reference key="8">
    <citation type="submission" date="2005-07" db="EMBL/GenBank/DDBJ databases">
        <authorList>
            <person name="Mural R.J."/>
            <person name="Istrail S."/>
            <person name="Sutton G."/>
            <person name="Florea L."/>
            <person name="Halpern A.L."/>
            <person name="Mobarry C.M."/>
            <person name="Lippert R."/>
            <person name="Walenz B."/>
            <person name="Shatkay H."/>
            <person name="Dew I."/>
            <person name="Miller J.R."/>
            <person name="Flanigan M.J."/>
            <person name="Edwards N.J."/>
            <person name="Bolanos R."/>
            <person name="Fasulo D."/>
            <person name="Halldorsson B.V."/>
            <person name="Hannenhalli S."/>
            <person name="Turner R."/>
            <person name="Yooseph S."/>
            <person name="Lu F."/>
            <person name="Nusskern D.R."/>
            <person name="Shue B.C."/>
            <person name="Zheng X.H."/>
            <person name="Zhong F."/>
            <person name="Delcher A.L."/>
            <person name="Huson D.H."/>
            <person name="Kravitz S.A."/>
            <person name="Mouchard L."/>
            <person name="Reinert K."/>
            <person name="Remington K.A."/>
            <person name="Clark A.G."/>
            <person name="Waterman M.S."/>
            <person name="Eichler E.E."/>
            <person name="Adams M.D."/>
            <person name="Hunkapiller M.W."/>
            <person name="Myers E.W."/>
            <person name="Venter J.C."/>
        </authorList>
    </citation>
    <scope>NUCLEOTIDE SEQUENCE [LARGE SCALE GENOMIC DNA]</scope>
</reference>
<reference key="9">
    <citation type="journal article" date="2004" name="Genome Res.">
        <title>The status, quality, and expansion of the NIH full-length cDNA project: the Mammalian Gene Collection (MGC).</title>
        <authorList>
            <consortium name="The MGC Project Team"/>
        </authorList>
    </citation>
    <scope>NUCLEOTIDE SEQUENCE [LARGE SCALE MRNA] (ISOFORM 4)</scope>
    <source>
        <tissue>Duodenum</tissue>
    </source>
</reference>
<reference key="10">
    <citation type="journal article" date="1995" name="Hum. Mol. Genet.">
        <title>The pre-mRNA of nuclear respiratory factor 1, a regulator of mitochondrial biogenesis, is alternatively spliced in human tissues and cell lines.</title>
        <authorList>
            <person name="Spelbrink J.N."/>
            <person name="Van den Bogert C."/>
        </authorList>
    </citation>
    <scope>ALTERNATIVE SPLICING</scope>
</reference>
<reference key="11">
    <citation type="journal article" date="1997" name="J. Biol. Chem.">
        <title>Serine phosphorylation within a concise amino-terminal domain in nuclear respiratory factor 1 enhances DNA binding.</title>
        <authorList>
            <person name="Gugneja S."/>
            <person name="Scarpulla R.C."/>
        </authorList>
    </citation>
    <scope>IDENTIFICATION OF DOMAINS</scope>
    <scope>PHOSPHORYLATION AT SER-39; SER-44; SER-46; SER-47 AND SER-52</scope>
</reference>
<reference key="12">
    <citation type="journal article" date="2001" name="Mol. Cell. Biol.">
        <title>Pgc-1-related coactivator, a novel, serum-inducible coactivator of nuclear respiratory factor 1-dependent transcription in mammalian cells.</title>
        <authorList>
            <person name="Andersson U."/>
            <person name="Scarpulla R.C."/>
        </authorList>
    </citation>
    <scope>INTERACTION WITH PPRC1</scope>
</reference>
<reference key="13">
    <citation type="journal article" date="2006" name="Mol. Cell. Biol.">
        <title>PGC-1-related coactivator: immediate early expression and characterization of a CREB/NRF-1 binding domain associated with cytochrome c promoter occupancy and respiratory growth.</title>
        <authorList>
            <person name="Vercauteren K."/>
            <person name="Pasko R.A."/>
            <person name="Gleyzer N."/>
            <person name="Marino V.M."/>
            <person name="Scarpulla R.C."/>
        </authorList>
    </citation>
    <scope>INTERACTION WITH PPRC1</scope>
</reference>
<reference key="14">
    <citation type="journal article" date="2011" name="BMC Syst. Biol.">
        <title>Initial characterization of the human central proteome.</title>
        <authorList>
            <person name="Burkard T.R."/>
            <person name="Planyavsky M."/>
            <person name="Kaupe I."/>
            <person name="Breitwieser F.P."/>
            <person name="Buerckstuemmer T."/>
            <person name="Bennett K.L."/>
            <person name="Superti-Furga G."/>
            <person name="Colinge J."/>
        </authorList>
    </citation>
    <scope>IDENTIFICATION BY MASS SPECTROMETRY [LARGE SCALE ANALYSIS]</scope>
</reference>
<reference key="15">
    <citation type="journal article" date="2017" name="Nat. Struct. Mol. Biol.">
        <title>Site-specific mapping of the human SUMO proteome reveals co-modification with phosphorylation.</title>
        <authorList>
            <person name="Hendriks I.A."/>
            <person name="Lyon D."/>
            <person name="Young C."/>
            <person name="Jensen L.J."/>
            <person name="Vertegaal A.C."/>
            <person name="Nielsen M.L."/>
        </authorList>
    </citation>
    <scope>SUMOYLATION [LARGE SCALE ANALYSIS] AT LYS-139</scope>
    <scope>IDENTIFICATION BY MASS SPECTROMETRY [LARGE SCALE ANALYSIS]</scope>
</reference>
<organism>
    <name type="scientific">Homo sapiens</name>
    <name type="common">Human</name>
    <dbReference type="NCBI Taxonomy" id="9606"/>
    <lineage>
        <taxon>Eukaryota</taxon>
        <taxon>Metazoa</taxon>
        <taxon>Chordata</taxon>
        <taxon>Craniata</taxon>
        <taxon>Vertebrata</taxon>
        <taxon>Euteleostomi</taxon>
        <taxon>Mammalia</taxon>
        <taxon>Eutheria</taxon>
        <taxon>Euarchontoglires</taxon>
        <taxon>Primates</taxon>
        <taxon>Haplorrhini</taxon>
        <taxon>Catarrhini</taxon>
        <taxon>Hominidae</taxon>
        <taxon>Homo</taxon>
    </lineage>
</organism>
<dbReference type="EMBL" id="L22454">
    <property type="protein sequence ID" value="AAA16918.1"/>
    <property type="molecule type" value="mRNA"/>
</dbReference>
<dbReference type="EMBL" id="U02683">
    <property type="protein sequence ID" value="AAA21647.1"/>
    <property type="molecule type" value="mRNA"/>
</dbReference>
<dbReference type="EMBL" id="U18383">
    <property type="protein sequence ID" value="AAA79013.1"/>
    <property type="molecule type" value="Genomic_DNA"/>
</dbReference>
<dbReference type="EMBL" id="U18375">
    <property type="protein sequence ID" value="AAA79013.1"/>
    <property type="status" value="JOINED"/>
    <property type="molecule type" value="Genomic_DNA"/>
</dbReference>
<dbReference type="EMBL" id="U18376">
    <property type="protein sequence ID" value="AAA79013.1"/>
    <property type="status" value="JOINED"/>
    <property type="molecule type" value="Genomic_DNA"/>
</dbReference>
<dbReference type="EMBL" id="U18377">
    <property type="protein sequence ID" value="AAA79013.1"/>
    <property type="status" value="JOINED"/>
    <property type="molecule type" value="Genomic_DNA"/>
</dbReference>
<dbReference type="EMBL" id="U18378">
    <property type="protein sequence ID" value="AAA79013.1"/>
    <property type="status" value="JOINED"/>
    <property type="molecule type" value="Genomic_DNA"/>
</dbReference>
<dbReference type="EMBL" id="U18379">
    <property type="protein sequence ID" value="AAA79013.1"/>
    <property type="status" value="JOINED"/>
    <property type="molecule type" value="Genomic_DNA"/>
</dbReference>
<dbReference type="EMBL" id="U18380">
    <property type="protein sequence ID" value="AAA79013.1"/>
    <property type="status" value="JOINED"/>
    <property type="molecule type" value="Genomic_DNA"/>
</dbReference>
<dbReference type="EMBL" id="U18381">
    <property type="protein sequence ID" value="AAA79013.1"/>
    <property type="status" value="JOINED"/>
    <property type="molecule type" value="Genomic_DNA"/>
</dbReference>
<dbReference type="EMBL" id="U18382">
    <property type="protein sequence ID" value="AAA79013.1"/>
    <property type="status" value="JOINED"/>
    <property type="molecule type" value="Genomic_DNA"/>
</dbReference>
<dbReference type="EMBL" id="EU159452">
    <property type="protein sequence ID" value="ABV90872.1"/>
    <property type="molecule type" value="mRNA"/>
</dbReference>
<dbReference type="EMBL" id="AK290891">
    <property type="protein sequence ID" value="BAF83580.1"/>
    <property type="molecule type" value="mRNA"/>
</dbReference>
<dbReference type="EMBL" id="AK293351">
    <property type="protein sequence ID" value="BAG56867.1"/>
    <property type="molecule type" value="mRNA"/>
</dbReference>
<dbReference type="EMBL" id="AC078846">
    <property type="status" value="NOT_ANNOTATED_CDS"/>
    <property type="molecule type" value="Genomic_DNA"/>
</dbReference>
<dbReference type="EMBL" id="AC084864">
    <property type="status" value="NOT_ANNOTATED_CDS"/>
    <property type="molecule type" value="Genomic_DNA"/>
</dbReference>
<dbReference type="EMBL" id="CH236950">
    <property type="protein sequence ID" value="EAL24100.1"/>
    <property type="molecule type" value="Genomic_DNA"/>
</dbReference>
<dbReference type="EMBL" id="CH471070">
    <property type="protein sequence ID" value="EAW83728.1"/>
    <property type="molecule type" value="Genomic_DNA"/>
</dbReference>
<dbReference type="EMBL" id="BC016925">
    <property type="protein sequence ID" value="AAH16925.1"/>
    <property type="molecule type" value="mRNA"/>
</dbReference>
<dbReference type="CCDS" id="CCDS5813.2">
    <molecule id="Q16656-1"/>
</dbReference>
<dbReference type="CCDS" id="CCDS78273.1">
    <molecule id="Q16656-4"/>
</dbReference>
<dbReference type="PIR" id="A54868">
    <property type="entry name" value="A54868"/>
</dbReference>
<dbReference type="RefSeq" id="NP_001035199.1">
    <molecule id="Q16656-1"/>
    <property type="nucleotide sequence ID" value="NM_001040110.2"/>
</dbReference>
<dbReference type="RefSeq" id="NP_001280092.1">
    <molecule id="Q16656-4"/>
    <property type="nucleotide sequence ID" value="NM_001293163.2"/>
</dbReference>
<dbReference type="RefSeq" id="NP_001280093.1">
    <molecule id="Q16656-3"/>
    <property type="nucleotide sequence ID" value="NM_001293164.2"/>
</dbReference>
<dbReference type="RefSeq" id="NP_005002.3">
    <molecule id="Q16656-1"/>
    <property type="nucleotide sequence ID" value="NM_005011.4"/>
</dbReference>
<dbReference type="PDB" id="8K3D">
    <property type="method" value="X-ray"/>
    <property type="resolution" value="2.30 A"/>
    <property type="chains" value="A=177-284"/>
</dbReference>
<dbReference type="PDB" id="8K4L">
    <property type="method" value="X-ray"/>
    <property type="resolution" value="2.10 A"/>
    <property type="chains" value="A/B=54-284"/>
</dbReference>
<dbReference type="PDBsum" id="8K3D"/>
<dbReference type="PDBsum" id="8K4L"/>
<dbReference type="SMR" id="Q16656"/>
<dbReference type="BioGRID" id="110955">
    <property type="interactions" value="80"/>
</dbReference>
<dbReference type="DIP" id="DIP-56958N"/>
<dbReference type="FunCoup" id="Q16656">
    <property type="interactions" value="6452"/>
</dbReference>
<dbReference type="IntAct" id="Q16656">
    <property type="interactions" value="53"/>
</dbReference>
<dbReference type="MINT" id="Q16656"/>
<dbReference type="STRING" id="9606.ENSP00000342351"/>
<dbReference type="GlyCosmos" id="Q16656">
    <property type="glycosylation" value="7 sites, 2 glycans"/>
</dbReference>
<dbReference type="GlyGen" id="Q16656">
    <property type="glycosylation" value="7 sites, 2 O-linked glycans (7 sites)"/>
</dbReference>
<dbReference type="iPTMnet" id="Q16656"/>
<dbReference type="PhosphoSitePlus" id="Q16656"/>
<dbReference type="BioMuta" id="NRF1"/>
<dbReference type="DMDM" id="12643732"/>
<dbReference type="jPOST" id="Q16656"/>
<dbReference type="MassIVE" id="Q16656"/>
<dbReference type="PaxDb" id="9606-ENSP00000376924"/>
<dbReference type="PeptideAtlas" id="Q16656"/>
<dbReference type="ProteomicsDB" id="3895"/>
<dbReference type="ProteomicsDB" id="61015">
    <molecule id="Q16656-1"/>
</dbReference>
<dbReference type="ProteomicsDB" id="61016">
    <molecule id="Q16656-2"/>
</dbReference>
<dbReference type="ProteomicsDB" id="75975"/>
<dbReference type="Pumba" id="Q16656"/>
<dbReference type="Antibodypedia" id="17908">
    <property type="antibodies" value="474 antibodies from 37 providers"/>
</dbReference>
<dbReference type="DNASU" id="4899"/>
<dbReference type="Ensembl" id="ENST00000223190.8">
    <molecule id="Q16656-1"/>
    <property type="protein sequence ID" value="ENSP00000223190.4"/>
    <property type="gene ID" value="ENSG00000106459.15"/>
</dbReference>
<dbReference type="Ensembl" id="ENST00000311967.6">
    <molecule id="Q16656-4"/>
    <property type="protein sequence ID" value="ENSP00000309826.2"/>
    <property type="gene ID" value="ENSG00000106459.15"/>
</dbReference>
<dbReference type="Ensembl" id="ENST00000353868.5">
    <molecule id="Q16656-4"/>
    <property type="protein sequence ID" value="ENSP00000342351.5"/>
    <property type="gene ID" value="ENSG00000106459.15"/>
</dbReference>
<dbReference type="Ensembl" id="ENST00000393230.6">
    <molecule id="Q16656-1"/>
    <property type="protein sequence ID" value="ENSP00000376922.2"/>
    <property type="gene ID" value="ENSG00000106459.15"/>
</dbReference>
<dbReference type="Ensembl" id="ENST00000393232.6">
    <molecule id="Q16656-1"/>
    <property type="protein sequence ID" value="ENSP00000376924.1"/>
    <property type="gene ID" value="ENSG00000106459.15"/>
</dbReference>
<dbReference type="GeneID" id="4899"/>
<dbReference type="KEGG" id="hsa:4899"/>
<dbReference type="MANE-Select" id="ENST00000393232.6">
    <property type="protein sequence ID" value="ENSP00000376924.1"/>
    <property type="RefSeq nucleotide sequence ID" value="NM_005011.5"/>
    <property type="RefSeq protein sequence ID" value="NP_005002.3"/>
</dbReference>
<dbReference type="UCSC" id="uc003voz.4">
    <molecule id="Q16656-1"/>
    <property type="organism name" value="human"/>
</dbReference>
<dbReference type="AGR" id="HGNC:7996"/>
<dbReference type="CTD" id="4899"/>
<dbReference type="DisGeNET" id="4899"/>
<dbReference type="GeneCards" id="NRF1"/>
<dbReference type="HGNC" id="HGNC:7996">
    <property type="gene designation" value="NRF1"/>
</dbReference>
<dbReference type="HPA" id="ENSG00000106459">
    <property type="expression patterns" value="Low tissue specificity"/>
</dbReference>
<dbReference type="MIM" id="600879">
    <property type="type" value="gene"/>
</dbReference>
<dbReference type="neXtProt" id="NX_Q16656"/>
<dbReference type="OpenTargets" id="ENSG00000106459"/>
<dbReference type="PharmGKB" id="PA31775"/>
<dbReference type="VEuPathDB" id="HostDB:ENSG00000106459"/>
<dbReference type="eggNOG" id="ENOG502QTK1">
    <property type="taxonomic scope" value="Eukaryota"/>
</dbReference>
<dbReference type="GeneTree" id="ENSGT00390000006835"/>
<dbReference type="HOGENOM" id="CLU_018156_3_1_1"/>
<dbReference type="InParanoid" id="Q16656"/>
<dbReference type="OMA" id="EVEPSWA"/>
<dbReference type="OrthoDB" id="10031051at2759"/>
<dbReference type="PAN-GO" id="Q16656">
    <property type="GO annotations" value="4 GO annotations based on evolutionary models"/>
</dbReference>
<dbReference type="PhylomeDB" id="Q16656"/>
<dbReference type="TreeFam" id="TF105308"/>
<dbReference type="PathwayCommons" id="Q16656"/>
<dbReference type="Reactome" id="R-HSA-1989781">
    <property type="pathway name" value="PPARA activates gene expression"/>
</dbReference>
<dbReference type="Reactome" id="R-HSA-2151201">
    <property type="pathway name" value="Transcriptional activation of mitochondrial biogenesis"/>
</dbReference>
<dbReference type="Reactome" id="R-HSA-9841251">
    <property type="pathway name" value="Mitochondrial unfolded protein response (UPRmt)"/>
</dbReference>
<dbReference type="SignaLink" id="Q16656"/>
<dbReference type="SIGNOR" id="Q16656"/>
<dbReference type="BioGRID-ORCS" id="4899">
    <property type="hits" value="832 hits in 1199 CRISPR screens"/>
</dbReference>
<dbReference type="ChiTaRS" id="NRF1">
    <property type="organism name" value="human"/>
</dbReference>
<dbReference type="GeneWiki" id="NRF1"/>
<dbReference type="GenomeRNAi" id="4899"/>
<dbReference type="Pharos" id="Q16656">
    <property type="development level" value="Tbio"/>
</dbReference>
<dbReference type="PRO" id="PR:Q16656"/>
<dbReference type="Proteomes" id="UP000005640">
    <property type="component" value="Chromosome 7"/>
</dbReference>
<dbReference type="RNAct" id="Q16656">
    <property type="molecule type" value="protein"/>
</dbReference>
<dbReference type="Bgee" id="ENSG00000106459">
    <property type="expression patterns" value="Expressed in cerebellar hemisphere and 149 other cell types or tissues"/>
</dbReference>
<dbReference type="ExpressionAtlas" id="Q16656">
    <property type="expression patterns" value="baseline and differential"/>
</dbReference>
<dbReference type="GO" id="GO:0005829">
    <property type="term" value="C:cytosol"/>
    <property type="evidence" value="ECO:0000314"/>
    <property type="project" value="HPA"/>
</dbReference>
<dbReference type="GO" id="GO:0070062">
    <property type="term" value="C:extracellular exosome"/>
    <property type="evidence" value="ECO:0007005"/>
    <property type="project" value="UniProtKB"/>
</dbReference>
<dbReference type="GO" id="GO:0005654">
    <property type="term" value="C:nucleoplasm"/>
    <property type="evidence" value="ECO:0000314"/>
    <property type="project" value="HPA"/>
</dbReference>
<dbReference type="GO" id="GO:0005634">
    <property type="term" value="C:nucleus"/>
    <property type="evidence" value="ECO:0000250"/>
    <property type="project" value="AgBase"/>
</dbReference>
<dbReference type="GO" id="GO:0001228">
    <property type="term" value="F:DNA-binding transcription activator activity, RNA polymerase II-specific"/>
    <property type="evidence" value="ECO:0000314"/>
    <property type="project" value="NTNU_SB"/>
</dbReference>
<dbReference type="GO" id="GO:0000981">
    <property type="term" value="F:DNA-binding transcription factor activity, RNA polymerase II-specific"/>
    <property type="evidence" value="ECO:0000318"/>
    <property type="project" value="GO_Central"/>
</dbReference>
<dbReference type="GO" id="GO:0042803">
    <property type="term" value="F:protein homodimerization activity"/>
    <property type="evidence" value="ECO:0000250"/>
    <property type="project" value="AgBase"/>
</dbReference>
<dbReference type="GO" id="GO:0000978">
    <property type="term" value="F:RNA polymerase II cis-regulatory region sequence-specific DNA binding"/>
    <property type="evidence" value="ECO:0000314"/>
    <property type="project" value="NTNU_SB"/>
</dbReference>
<dbReference type="GO" id="GO:0045944">
    <property type="term" value="P:positive regulation of transcription by RNA polymerase II"/>
    <property type="evidence" value="ECO:0000315"/>
    <property type="project" value="NTNU_SB"/>
</dbReference>
<dbReference type="GO" id="GO:0006357">
    <property type="term" value="P:regulation of transcription by RNA polymerase II"/>
    <property type="evidence" value="ECO:0000318"/>
    <property type="project" value="GO_Central"/>
</dbReference>
<dbReference type="InterPro" id="IPR039142">
    <property type="entry name" value="NRF1/Ewg"/>
</dbReference>
<dbReference type="InterPro" id="IPR019525">
    <property type="entry name" value="Nrf1_NLS/DNA-bd_dimer"/>
</dbReference>
<dbReference type="PANTHER" id="PTHR20338">
    <property type="entry name" value="NUCLEAR RESPIRATORY FACTOR 1"/>
    <property type="match status" value="1"/>
</dbReference>
<dbReference type="Pfam" id="PF10491">
    <property type="entry name" value="Nrf1_DNA-bind"/>
    <property type="match status" value="1"/>
</dbReference>